<reference key="1">
    <citation type="journal article" date="2002" name="J. Mol. Microbiol. Biotechnol.">
        <title>The genome of Methanosarcina mazei: evidence for lateral gene transfer between Bacteria and Archaea.</title>
        <authorList>
            <person name="Deppenmeier U."/>
            <person name="Johann A."/>
            <person name="Hartsch T."/>
            <person name="Merkl R."/>
            <person name="Schmitz R.A."/>
            <person name="Martinez-Arias R."/>
            <person name="Henne A."/>
            <person name="Wiezer A."/>
            <person name="Baeumer S."/>
            <person name="Jacobi C."/>
            <person name="Brueggemann H."/>
            <person name="Lienard T."/>
            <person name="Christmann A."/>
            <person name="Boemecke M."/>
            <person name="Steckel S."/>
            <person name="Bhattacharyya A."/>
            <person name="Lykidis A."/>
            <person name="Overbeek R."/>
            <person name="Klenk H.-P."/>
            <person name="Gunsalus R.P."/>
            <person name="Fritz H.-J."/>
            <person name="Gottschalk G."/>
        </authorList>
    </citation>
    <scope>NUCLEOTIDE SEQUENCE [LARGE SCALE GENOMIC DNA]</scope>
    <source>
        <strain>ATCC BAA-159 / DSM 3647 / Goe1 / Go1 / JCM 11833 / OCM 88</strain>
    </source>
</reference>
<organism>
    <name type="scientific">Methanosarcina mazei (strain ATCC BAA-159 / DSM 3647 / Goe1 / Go1 / JCM 11833 / OCM 88)</name>
    <name type="common">Methanosarcina frisia</name>
    <dbReference type="NCBI Taxonomy" id="192952"/>
    <lineage>
        <taxon>Archaea</taxon>
        <taxon>Methanobacteriati</taxon>
        <taxon>Methanobacteriota</taxon>
        <taxon>Stenosarchaea group</taxon>
        <taxon>Methanomicrobia</taxon>
        <taxon>Methanosarcinales</taxon>
        <taxon>Methanosarcinaceae</taxon>
        <taxon>Methanosarcina</taxon>
    </lineage>
</organism>
<sequence length="227" mass="25449">MPEIRQLSEGIFEVTKDKKQLSTLNLDPGKVVYGEKLISVEGDEYRTWDPRRSKLGAMVLKKFDIPLKRNSKVLYLGAASGTTVSHVSDIVSEGAVYSVEFAPRSMRDFIGLASRRKNIFPILADAGKPDSYAHIVEPVDVIFQDVAQPNQAEIAARNAVRFLKKDGYLLLSIKARSIDTAASPKEIFKEEVKKLEQAFEPGFEVLTARELMPYHEDHLGVMARLKK</sequence>
<dbReference type="EC" id="2.1.1.-" evidence="1"/>
<dbReference type="EMBL" id="AE008384">
    <property type="protein sequence ID" value="AAM31290.1"/>
    <property type="molecule type" value="Genomic_DNA"/>
</dbReference>
<dbReference type="RefSeq" id="WP_011033539.1">
    <property type="nucleotide sequence ID" value="NC_003901.1"/>
</dbReference>
<dbReference type="SMR" id="P0CW09"/>
<dbReference type="KEGG" id="mma:MM_1594"/>
<dbReference type="PATRIC" id="fig|192952.21.peg.1843"/>
<dbReference type="eggNOG" id="arCOG00078">
    <property type="taxonomic scope" value="Archaea"/>
</dbReference>
<dbReference type="HOGENOM" id="CLU_059055_2_0_2"/>
<dbReference type="Proteomes" id="UP000000595">
    <property type="component" value="Chromosome"/>
</dbReference>
<dbReference type="GO" id="GO:1990259">
    <property type="term" value="F:histone H2AQ104 methyltransferase activity"/>
    <property type="evidence" value="ECO:0007669"/>
    <property type="project" value="TreeGrafter"/>
</dbReference>
<dbReference type="GO" id="GO:0003723">
    <property type="term" value="F:RNA binding"/>
    <property type="evidence" value="ECO:0007669"/>
    <property type="project" value="UniProtKB-UniRule"/>
</dbReference>
<dbReference type="GO" id="GO:0008649">
    <property type="term" value="F:rRNA methyltransferase activity"/>
    <property type="evidence" value="ECO:0007669"/>
    <property type="project" value="TreeGrafter"/>
</dbReference>
<dbReference type="GO" id="GO:0000494">
    <property type="term" value="P:box C/D sno(s)RNA 3'-end processing"/>
    <property type="evidence" value="ECO:0007669"/>
    <property type="project" value="TreeGrafter"/>
</dbReference>
<dbReference type="GO" id="GO:0008033">
    <property type="term" value="P:tRNA processing"/>
    <property type="evidence" value="ECO:0007669"/>
    <property type="project" value="UniProtKB-UniRule"/>
</dbReference>
<dbReference type="FunFam" id="3.40.50.150:FF:000343">
    <property type="entry name" value="Fibrillarin-like rRNA/tRNA 2'-O-methyltransferase"/>
    <property type="match status" value="1"/>
</dbReference>
<dbReference type="Gene3D" id="3.30.200.20">
    <property type="entry name" value="Phosphorylase Kinase, domain 1"/>
    <property type="match status" value="1"/>
</dbReference>
<dbReference type="Gene3D" id="3.40.50.150">
    <property type="entry name" value="Vaccinia Virus protein VP39"/>
    <property type="match status" value="1"/>
</dbReference>
<dbReference type="HAMAP" id="MF_00351">
    <property type="entry name" value="RNA_methyltransf_FlpA"/>
    <property type="match status" value="1"/>
</dbReference>
<dbReference type="InterPro" id="IPR000692">
    <property type="entry name" value="Fibrillarin"/>
</dbReference>
<dbReference type="InterPro" id="IPR020813">
    <property type="entry name" value="Fibrillarin_CS"/>
</dbReference>
<dbReference type="InterPro" id="IPR029063">
    <property type="entry name" value="SAM-dependent_MTases_sf"/>
</dbReference>
<dbReference type="NCBIfam" id="NF003276">
    <property type="entry name" value="PRK04266.1-2"/>
    <property type="match status" value="1"/>
</dbReference>
<dbReference type="NCBIfam" id="NF003278">
    <property type="entry name" value="PRK04266.1-4"/>
    <property type="match status" value="1"/>
</dbReference>
<dbReference type="PANTHER" id="PTHR10335:SF17">
    <property type="entry name" value="FIBRILLARIN"/>
    <property type="match status" value="1"/>
</dbReference>
<dbReference type="PANTHER" id="PTHR10335">
    <property type="entry name" value="RRNA 2-O-METHYLTRANSFERASE FIBRILLARIN"/>
    <property type="match status" value="1"/>
</dbReference>
<dbReference type="Pfam" id="PF01269">
    <property type="entry name" value="Fibrillarin"/>
    <property type="match status" value="1"/>
</dbReference>
<dbReference type="PIRSF" id="PIRSF006540">
    <property type="entry name" value="Nop17p"/>
    <property type="match status" value="1"/>
</dbReference>
<dbReference type="PRINTS" id="PR00052">
    <property type="entry name" value="FIBRILLARIN"/>
</dbReference>
<dbReference type="SMART" id="SM01206">
    <property type="entry name" value="Fibrillarin"/>
    <property type="match status" value="1"/>
</dbReference>
<dbReference type="SUPFAM" id="SSF53335">
    <property type="entry name" value="S-adenosyl-L-methionine-dependent methyltransferases"/>
    <property type="match status" value="1"/>
</dbReference>
<dbReference type="PROSITE" id="PS00566">
    <property type="entry name" value="FIBRILLARIN"/>
    <property type="match status" value="1"/>
</dbReference>
<comment type="function">
    <text evidence="1">Involved in pre-rRNA and tRNA processing. Utilizes the methyl donor S-adenosyl-L-methionine to catalyze the site-specific 2'-hydroxyl methylation of ribose moieties in rRNA and tRNA. Site specificity is provided by a guide RNA that base pairs with the substrate. Methylation occurs at a characteristic distance from the sequence involved in base pairing with the guide RNA.</text>
</comment>
<comment type="subunit">
    <text evidence="1">Interacts with nop5. Component of box C/D small ribonucleoprotein (sRNP) particles that contain rpl7ae, FlpA and nop5, plus a guide RNA.</text>
</comment>
<comment type="similarity">
    <text evidence="1">Belongs to the methyltransferase superfamily. Fibrillarin family.</text>
</comment>
<keyword id="KW-0489">Methyltransferase</keyword>
<keyword id="KW-0694">RNA-binding</keyword>
<keyword id="KW-0698">rRNA processing</keyword>
<keyword id="KW-0808">Transferase</keyword>
<keyword id="KW-0819">tRNA processing</keyword>
<protein>
    <recommendedName>
        <fullName evidence="1">Fibrillarin-like rRNA/tRNA 2'-O-methyltransferase</fullName>
        <ecNumber evidence="1">2.1.1.-</ecNumber>
    </recommendedName>
</protein>
<evidence type="ECO:0000255" key="1">
    <source>
        <dbReference type="HAMAP-Rule" id="MF_00351"/>
    </source>
</evidence>
<name>FLPA_METMA</name>
<proteinExistence type="inferred from homology"/>
<feature type="chain" id="PRO_0000408037" description="Fibrillarin-like rRNA/tRNA 2'-O-methyltransferase">
    <location>
        <begin position="1"/>
        <end position="227"/>
    </location>
</feature>
<feature type="binding site" evidence="1">
    <location>
        <begin position="82"/>
        <end position="83"/>
    </location>
    <ligand>
        <name>S-adenosyl-L-methionine</name>
        <dbReference type="ChEBI" id="CHEBI:59789"/>
    </ligand>
</feature>
<feature type="binding site" evidence="1">
    <location>
        <begin position="100"/>
        <end position="101"/>
    </location>
    <ligand>
        <name>S-adenosyl-L-methionine</name>
        <dbReference type="ChEBI" id="CHEBI:59789"/>
    </ligand>
</feature>
<feature type="binding site" evidence="1">
    <location>
        <begin position="125"/>
        <end position="126"/>
    </location>
    <ligand>
        <name>S-adenosyl-L-methionine</name>
        <dbReference type="ChEBI" id="CHEBI:59789"/>
    </ligand>
</feature>
<feature type="binding site" evidence="1">
    <location>
        <begin position="145"/>
        <end position="148"/>
    </location>
    <ligand>
        <name>S-adenosyl-L-methionine</name>
        <dbReference type="ChEBI" id="CHEBI:59789"/>
    </ligand>
</feature>
<accession>P0CW09</accession>
<accession>O53133</accession>
<gene>
    <name evidence="1" type="primary">flpA</name>
    <name type="synonym">fibM</name>
    <name type="ordered locus">MM_1594</name>
</gene>